<feature type="chain" id="PRO_0000386383" description="GTPase Obg">
    <location>
        <begin position="1"/>
        <end position="390"/>
    </location>
</feature>
<feature type="domain" description="Obg" evidence="2">
    <location>
        <begin position="1"/>
        <end position="159"/>
    </location>
</feature>
<feature type="domain" description="OBG-type G" evidence="1">
    <location>
        <begin position="160"/>
        <end position="333"/>
    </location>
</feature>
<feature type="binding site" evidence="1">
    <location>
        <begin position="166"/>
        <end position="173"/>
    </location>
    <ligand>
        <name>GTP</name>
        <dbReference type="ChEBI" id="CHEBI:37565"/>
    </ligand>
</feature>
<feature type="binding site" evidence="1">
    <location>
        <position position="173"/>
    </location>
    <ligand>
        <name>Mg(2+)</name>
        <dbReference type="ChEBI" id="CHEBI:18420"/>
    </ligand>
</feature>
<feature type="binding site" evidence="1">
    <location>
        <begin position="191"/>
        <end position="195"/>
    </location>
    <ligand>
        <name>GTP</name>
        <dbReference type="ChEBI" id="CHEBI:37565"/>
    </ligand>
</feature>
<feature type="binding site" evidence="1">
    <location>
        <position position="193"/>
    </location>
    <ligand>
        <name>Mg(2+)</name>
        <dbReference type="ChEBI" id="CHEBI:18420"/>
    </ligand>
</feature>
<feature type="binding site" evidence="1">
    <location>
        <begin position="213"/>
        <end position="216"/>
    </location>
    <ligand>
        <name>GTP</name>
        <dbReference type="ChEBI" id="CHEBI:37565"/>
    </ligand>
</feature>
<feature type="binding site" evidence="1">
    <location>
        <begin position="283"/>
        <end position="286"/>
    </location>
    <ligand>
        <name>GTP</name>
        <dbReference type="ChEBI" id="CHEBI:37565"/>
    </ligand>
</feature>
<feature type="binding site" evidence="1">
    <location>
        <begin position="314"/>
        <end position="316"/>
    </location>
    <ligand>
        <name>GTP</name>
        <dbReference type="ChEBI" id="CHEBI:37565"/>
    </ligand>
</feature>
<accession>B7VID5</accession>
<keyword id="KW-0963">Cytoplasm</keyword>
<keyword id="KW-0342">GTP-binding</keyword>
<keyword id="KW-0378">Hydrolase</keyword>
<keyword id="KW-0460">Magnesium</keyword>
<keyword id="KW-0479">Metal-binding</keyword>
<keyword id="KW-0547">Nucleotide-binding</keyword>
<name>OBG_VIBA3</name>
<sequence>MKFVDEASVKIEAGDGGNGTVSFWREKFVAKGGPDGGDGGDGGDVYIQADENLNTLIDYRFQRFYNAERGENGRGGNCTGKRGKDMTMKVPVGTRAVDIHTNEIVAEVAEHGKKVMVGKGGWHGLGNTRFKSSVNRAPRQKTMGTKGEVRELRLELLLLADVGMLGLPNAGKSTFIRSVSAAKPKVADYPFTTLIPSLGVVSVVPEKSFVVADIPGLIEGAADGAGLGIRFLKHLERCRVLLHMIDILPIDGSDPIQNALTIIDELEQYSEKVAQKPRWLVFNKVDLMPEEEADEKIQEIVEALGWEGEYFKISAVNKIGTKDLCFKLGEFMENLPREVEAIEEEEKVNFMWDDYHKDAMAGKNVVTEDDDDWDDWDDEEDDGHVIYVRD</sequence>
<comment type="function">
    <text evidence="1">An essential GTPase which binds GTP, GDP and possibly (p)ppGpp with moderate affinity, with high nucleotide exchange rates and a fairly low GTP hydrolysis rate. Plays a role in control of the cell cycle, stress response, ribosome biogenesis and in those bacteria that undergo differentiation, in morphogenesis control.</text>
</comment>
<comment type="cofactor">
    <cofactor evidence="1">
        <name>Mg(2+)</name>
        <dbReference type="ChEBI" id="CHEBI:18420"/>
    </cofactor>
</comment>
<comment type="subunit">
    <text evidence="1">Monomer.</text>
</comment>
<comment type="subcellular location">
    <subcellularLocation>
        <location evidence="1">Cytoplasm</location>
    </subcellularLocation>
</comment>
<comment type="similarity">
    <text evidence="1">Belongs to the TRAFAC class OBG-HflX-like GTPase superfamily. OBG GTPase family.</text>
</comment>
<protein>
    <recommendedName>
        <fullName evidence="1">GTPase Obg</fullName>
        <ecNumber evidence="1">3.6.5.-</ecNumber>
    </recommendedName>
    <alternativeName>
        <fullName evidence="1">GTP-binding protein Obg</fullName>
    </alternativeName>
</protein>
<organism>
    <name type="scientific">Vibrio atlanticus (strain LGP32)</name>
    <name type="common">Vibrio splendidus (strain Mel32)</name>
    <dbReference type="NCBI Taxonomy" id="575788"/>
    <lineage>
        <taxon>Bacteria</taxon>
        <taxon>Pseudomonadati</taxon>
        <taxon>Pseudomonadota</taxon>
        <taxon>Gammaproteobacteria</taxon>
        <taxon>Vibrionales</taxon>
        <taxon>Vibrionaceae</taxon>
        <taxon>Vibrio</taxon>
    </lineage>
</organism>
<evidence type="ECO:0000255" key="1">
    <source>
        <dbReference type="HAMAP-Rule" id="MF_01454"/>
    </source>
</evidence>
<evidence type="ECO:0000255" key="2">
    <source>
        <dbReference type="PROSITE-ProRule" id="PRU01231"/>
    </source>
</evidence>
<gene>
    <name evidence="1" type="primary">obg</name>
    <name type="ordered locus">VS_0363</name>
</gene>
<reference key="1">
    <citation type="submission" date="2009-02" db="EMBL/GenBank/DDBJ databases">
        <title>Vibrio splendidus str. LGP32 complete genome.</title>
        <authorList>
            <person name="Mazel D."/>
            <person name="Le Roux F."/>
        </authorList>
    </citation>
    <scope>NUCLEOTIDE SEQUENCE [LARGE SCALE GENOMIC DNA]</scope>
    <source>
        <strain>LGP32</strain>
    </source>
</reference>
<dbReference type="EC" id="3.6.5.-" evidence="1"/>
<dbReference type="EMBL" id="FM954972">
    <property type="protein sequence ID" value="CAV17372.1"/>
    <property type="molecule type" value="Genomic_DNA"/>
</dbReference>
<dbReference type="SMR" id="B7VID5"/>
<dbReference type="STRING" id="575788.VS_0363"/>
<dbReference type="KEGG" id="vsp:VS_0363"/>
<dbReference type="eggNOG" id="COG0536">
    <property type="taxonomic scope" value="Bacteria"/>
</dbReference>
<dbReference type="HOGENOM" id="CLU_011747_2_0_6"/>
<dbReference type="Proteomes" id="UP000009100">
    <property type="component" value="Chromosome 1"/>
</dbReference>
<dbReference type="GO" id="GO:0005737">
    <property type="term" value="C:cytoplasm"/>
    <property type="evidence" value="ECO:0007669"/>
    <property type="project" value="UniProtKB-SubCell"/>
</dbReference>
<dbReference type="GO" id="GO:0005525">
    <property type="term" value="F:GTP binding"/>
    <property type="evidence" value="ECO:0007669"/>
    <property type="project" value="UniProtKB-UniRule"/>
</dbReference>
<dbReference type="GO" id="GO:0003924">
    <property type="term" value="F:GTPase activity"/>
    <property type="evidence" value="ECO:0007669"/>
    <property type="project" value="UniProtKB-UniRule"/>
</dbReference>
<dbReference type="GO" id="GO:0000287">
    <property type="term" value="F:magnesium ion binding"/>
    <property type="evidence" value="ECO:0007669"/>
    <property type="project" value="InterPro"/>
</dbReference>
<dbReference type="GO" id="GO:0042254">
    <property type="term" value="P:ribosome biogenesis"/>
    <property type="evidence" value="ECO:0007669"/>
    <property type="project" value="UniProtKB-UniRule"/>
</dbReference>
<dbReference type="CDD" id="cd01898">
    <property type="entry name" value="Obg"/>
    <property type="match status" value="1"/>
</dbReference>
<dbReference type="FunFam" id="2.70.210.12:FF:000001">
    <property type="entry name" value="GTPase Obg"/>
    <property type="match status" value="1"/>
</dbReference>
<dbReference type="Gene3D" id="2.70.210.12">
    <property type="entry name" value="GTP1/OBG domain"/>
    <property type="match status" value="1"/>
</dbReference>
<dbReference type="Gene3D" id="3.40.50.300">
    <property type="entry name" value="P-loop containing nucleotide triphosphate hydrolases"/>
    <property type="match status" value="1"/>
</dbReference>
<dbReference type="HAMAP" id="MF_01454">
    <property type="entry name" value="GTPase_Obg"/>
    <property type="match status" value="1"/>
</dbReference>
<dbReference type="InterPro" id="IPR031167">
    <property type="entry name" value="G_OBG"/>
</dbReference>
<dbReference type="InterPro" id="IPR006073">
    <property type="entry name" value="GTP-bd"/>
</dbReference>
<dbReference type="InterPro" id="IPR014100">
    <property type="entry name" value="GTP-bd_Obg/CgtA"/>
</dbReference>
<dbReference type="InterPro" id="IPR006074">
    <property type="entry name" value="GTP1-OBG_CS"/>
</dbReference>
<dbReference type="InterPro" id="IPR006169">
    <property type="entry name" value="GTP1_OBG_dom"/>
</dbReference>
<dbReference type="InterPro" id="IPR036726">
    <property type="entry name" value="GTP1_OBG_dom_sf"/>
</dbReference>
<dbReference type="InterPro" id="IPR045086">
    <property type="entry name" value="OBG_GTPase"/>
</dbReference>
<dbReference type="InterPro" id="IPR027417">
    <property type="entry name" value="P-loop_NTPase"/>
</dbReference>
<dbReference type="NCBIfam" id="TIGR02729">
    <property type="entry name" value="Obg_CgtA"/>
    <property type="match status" value="1"/>
</dbReference>
<dbReference type="NCBIfam" id="NF008955">
    <property type="entry name" value="PRK12297.1"/>
    <property type="match status" value="1"/>
</dbReference>
<dbReference type="NCBIfam" id="NF008956">
    <property type="entry name" value="PRK12299.1"/>
    <property type="match status" value="1"/>
</dbReference>
<dbReference type="PANTHER" id="PTHR11702">
    <property type="entry name" value="DEVELOPMENTALLY REGULATED GTP-BINDING PROTEIN-RELATED"/>
    <property type="match status" value="1"/>
</dbReference>
<dbReference type="PANTHER" id="PTHR11702:SF31">
    <property type="entry name" value="MITOCHONDRIAL RIBOSOME-ASSOCIATED GTPASE 2"/>
    <property type="match status" value="1"/>
</dbReference>
<dbReference type="Pfam" id="PF01018">
    <property type="entry name" value="GTP1_OBG"/>
    <property type="match status" value="1"/>
</dbReference>
<dbReference type="Pfam" id="PF01926">
    <property type="entry name" value="MMR_HSR1"/>
    <property type="match status" value="1"/>
</dbReference>
<dbReference type="PIRSF" id="PIRSF002401">
    <property type="entry name" value="GTP_bd_Obg/CgtA"/>
    <property type="match status" value="1"/>
</dbReference>
<dbReference type="PRINTS" id="PR00326">
    <property type="entry name" value="GTP1OBG"/>
</dbReference>
<dbReference type="SUPFAM" id="SSF82051">
    <property type="entry name" value="Obg GTP-binding protein N-terminal domain"/>
    <property type="match status" value="1"/>
</dbReference>
<dbReference type="SUPFAM" id="SSF52540">
    <property type="entry name" value="P-loop containing nucleoside triphosphate hydrolases"/>
    <property type="match status" value="1"/>
</dbReference>
<dbReference type="PROSITE" id="PS51710">
    <property type="entry name" value="G_OBG"/>
    <property type="match status" value="1"/>
</dbReference>
<dbReference type="PROSITE" id="PS00905">
    <property type="entry name" value="GTP1_OBG"/>
    <property type="match status" value="1"/>
</dbReference>
<dbReference type="PROSITE" id="PS51883">
    <property type="entry name" value="OBG"/>
    <property type="match status" value="1"/>
</dbReference>
<proteinExistence type="inferred from homology"/>